<dbReference type="EC" id="6.3.2.8" evidence="1"/>
<dbReference type="EMBL" id="AE015927">
    <property type="protein sequence ID" value="AAO34835.1"/>
    <property type="molecule type" value="Genomic_DNA"/>
</dbReference>
<dbReference type="RefSeq" id="WP_011098505.1">
    <property type="nucleotide sequence ID" value="NC_004557.1"/>
</dbReference>
<dbReference type="SMR" id="Q899J1"/>
<dbReference type="STRING" id="212717.CTC_00185"/>
<dbReference type="GeneID" id="24255036"/>
<dbReference type="KEGG" id="ctc:CTC_00185"/>
<dbReference type="HOGENOM" id="CLU_028104_1_0_9"/>
<dbReference type="OrthoDB" id="9804126at2"/>
<dbReference type="UniPathway" id="UPA00219"/>
<dbReference type="Proteomes" id="UP000001412">
    <property type="component" value="Chromosome"/>
</dbReference>
<dbReference type="GO" id="GO:0005737">
    <property type="term" value="C:cytoplasm"/>
    <property type="evidence" value="ECO:0007669"/>
    <property type="project" value="UniProtKB-SubCell"/>
</dbReference>
<dbReference type="GO" id="GO:0005524">
    <property type="term" value="F:ATP binding"/>
    <property type="evidence" value="ECO:0007669"/>
    <property type="project" value="UniProtKB-UniRule"/>
</dbReference>
<dbReference type="GO" id="GO:0008763">
    <property type="term" value="F:UDP-N-acetylmuramate-L-alanine ligase activity"/>
    <property type="evidence" value="ECO:0007669"/>
    <property type="project" value="UniProtKB-UniRule"/>
</dbReference>
<dbReference type="GO" id="GO:0051301">
    <property type="term" value="P:cell division"/>
    <property type="evidence" value="ECO:0007669"/>
    <property type="project" value="UniProtKB-KW"/>
</dbReference>
<dbReference type="GO" id="GO:0071555">
    <property type="term" value="P:cell wall organization"/>
    <property type="evidence" value="ECO:0007669"/>
    <property type="project" value="UniProtKB-KW"/>
</dbReference>
<dbReference type="GO" id="GO:0009252">
    <property type="term" value="P:peptidoglycan biosynthetic process"/>
    <property type="evidence" value="ECO:0007669"/>
    <property type="project" value="UniProtKB-UniRule"/>
</dbReference>
<dbReference type="GO" id="GO:0008360">
    <property type="term" value="P:regulation of cell shape"/>
    <property type="evidence" value="ECO:0007669"/>
    <property type="project" value="UniProtKB-KW"/>
</dbReference>
<dbReference type="Gene3D" id="3.90.190.20">
    <property type="entry name" value="Mur ligase, C-terminal domain"/>
    <property type="match status" value="1"/>
</dbReference>
<dbReference type="Gene3D" id="3.40.1190.10">
    <property type="entry name" value="Mur-like, catalytic domain"/>
    <property type="match status" value="1"/>
</dbReference>
<dbReference type="Gene3D" id="3.40.50.720">
    <property type="entry name" value="NAD(P)-binding Rossmann-like Domain"/>
    <property type="match status" value="1"/>
</dbReference>
<dbReference type="HAMAP" id="MF_00046">
    <property type="entry name" value="MurC"/>
    <property type="match status" value="1"/>
</dbReference>
<dbReference type="InterPro" id="IPR036565">
    <property type="entry name" value="Mur-like_cat_sf"/>
</dbReference>
<dbReference type="InterPro" id="IPR004101">
    <property type="entry name" value="Mur_ligase_C"/>
</dbReference>
<dbReference type="InterPro" id="IPR036615">
    <property type="entry name" value="Mur_ligase_C_dom_sf"/>
</dbReference>
<dbReference type="InterPro" id="IPR013221">
    <property type="entry name" value="Mur_ligase_cen"/>
</dbReference>
<dbReference type="InterPro" id="IPR000713">
    <property type="entry name" value="Mur_ligase_N"/>
</dbReference>
<dbReference type="InterPro" id="IPR050061">
    <property type="entry name" value="MurCDEF_pg_biosynth"/>
</dbReference>
<dbReference type="InterPro" id="IPR005758">
    <property type="entry name" value="UDP-N-AcMur_Ala_ligase_MurC"/>
</dbReference>
<dbReference type="NCBIfam" id="TIGR01082">
    <property type="entry name" value="murC"/>
    <property type="match status" value="1"/>
</dbReference>
<dbReference type="PANTHER" id="PTHR43445:SF3">
    <property type="entry name" value="UDP-N-ACETYLMURAMATE--L-ALANINE LIGASE"/>
    <property type="match status" value="1"/>
</dbReference>
<dbReference type="PANTHER" id="PTHR43445">
    <property type="entry name" value="UDP-N-ACETYLMURAMATE--L-ALANINE LIGASE-RELATED"/>
    <property type="match status" value="1"/>
</dbReference>
<dbReference type="Pfam" id="PF01225">
    <property type="entry name" value="Mur_ligase"/>
    <property type="match status" value="1"/>
</dbReference>
<dbReference type="Pfam" id="PF02875">
    <property type="entry name" value="Mur_ligase_C"/>
    <property type="match status" value="1"/>
</dbReference>
<dbReference type="Pfam" id="PF08245">
    <property type="entry name" value="Mur_ligase_M"/>
    <property type="match status" value="1"/>
</dbReference>
<dbReference type="SUPFAM" id="SSF51984">
    <property type="entry name" value="MurCD N-terminal domain"/>
    <property type="match status" value="1"/>
</dbReference>
<dbReference type="SUPFAM" id="SSF53623">
    <property type="entry name" value="MurD-like peptide ligases, catalytic domain"/>
    <property type="match status" value="1"/>
</dbReference>
<dbReference type="SUPFAM" id="SSF53244">
    <property type="entry name" value="MurD-like peptide ligases, peptide-binding domain"/>
    <property type="match status" value="1"/>
</dbReference>
<name>MURC_CLOTE</name>
<accession>Q899J1</accession>
<organism>
    <name type="scientific">Clostridium tetani (strain Massachusetts / E88)</name>
    <dbReference type="NCBI Taxonomy" id="212717"/>
    <lineage>
        <taxon>Bacteria</taxon>
        <taxon>Bacillati</taxon>
        <taxon>Bacillota</taxon>
        <taxon>Clostridia</taxon>
        <taxon>Eubacteriales</taxon>
        <taxon>Clostridiaceae</taxon>
        <taxon>Clostridium</taxon>
    </lineage>
</organism>
<reference key="1">
    <citation type="journal article" date="2003" name="Proc. Natl. Acad. Sci. U.S.A.">
        <title>The genome sequence of Clostridium tetani, the causative agent of tetanus disease.</title>
        <authorList>
            <person name="Brueggemann H."/>
            <person name="Baeumer S."/>
            <person name="Fricke W.F."/>
            <person name="Wiezer A."/>
            <person name="Liesegang H."/>
            <person name="Decker I."/>
            <person name="Herzberg C."/>
            <person name="Martinez-Arias R."/>
            <person name="Merkl R."/>
            <person name="Henne A."/>
            <person name="Gottschalk G."/>
        </authorList>
    </citation>
    <scope>NUCLEOTIDE SEQUENCE [LARGE SCALE GENOMIC DNA]</scope>
    <source>
        <strain>Massachusetts / E88</strain>
    </source>
</reference>
<feature type="chain" id="PRO_0000182081" description="UDP-N-acetylmuramate--L-alanine ligase">
    <location>
        <begin position="1"/>
        <end position="456"/>
    </location>
</feature>
<feature type="binding site" evidence="1">
    <location>
        <begin position="117"/>
        <end position="123"/>
    </location>
    <ligand>
        <name>ATP</name>
        <dbReference type="ChEBI" id="CHEBI:30616"/>
    </ligand>
</feature>
<proteinExistence type="inferred from homology"/>
<protein>
    <recommendedName>
        <fullName evidence="1">UDP-N-acetylmuramate--L-alanine ligase</fullName>
        <ecNumber evidence="1">6.3.2.8</ecNumber>
    </recommendedName>
    <alternativeName>
        <fullName evidence="1">UDP-N-acetylmuramoyl-L-alanine synthetase</fullName>
    </alternativeName>
</protein>
<comment type="function">
    <text evidence="1">Cell wall formation.</text>
</comment>
<comment type="catalytic activity">
    <reaction evidence="1">
        <text>UDP-N-acetyl-alpha-D-muramate + L-alanine + ATP = UDP-N-acetyl-alpha-D-muramoyl-L-alanine + ADP + phosphate + H(+)</text>
        <dbReference type="Rhea" id="RHEA:23372"/>
        <dbReference type="ChEBI" id="CHEBI:15378"/>
        <dbReference type="ChEBI" id="CHEBI:30616"/>
        <dbReference type="ChEBI" id="CHEBI:43474"/>
        <dbReference type="ChEBI" id="CHEBI:57972"/>
        <dbReference type="ChEBI" id="CHEBI:70757"/>
        <dbReference type="ChEBI" id="CHEBI:83898"/>
        <dbReference type="ChEBI" id="CHEBI:456216"/>
        <dbReference type="EC" id="6.3.2.8"/>
    </reaction>
</comment>
<comment type="pathway">
    <text evidence="1">Cell wall biogenesis; peptidoglycan biosynthesis.</text>
</comment>
<comment type="subcellular location">
    <subcellularLocation>
        <location evidence="1">Cytoplasm</location>
    </subcellularLocation>
</comment>
<comment type="similarity">
    <text evidence="1">Belongs to the MurCDEF family.</text>
</comment>
<sequence length="456" mass="50816">MSFDFLKYIKKVHFIGIGGISMSGMAEILLKKGYKVSGSDSTKSPIIDKLINLGAEIYIGHKAENIKNVDLIVYTAAVSEDNPELTKALTNNIKIMNRAEFLGYLMDGHKYNIAVSGTHGKTTTTSMMSHITVNANLDPTILVGGELNIINGNVRTGKSEYFLTEACEYKESFLKFFPYIGVILNIDADHLDYYKDINHIKNAFSKFANLIPKDGYLIACAEDENINDIIKNIDCTIITYGLNKGDIQAKNITFDNKGCASFDVIKNSSVLFSVKLNVPGSYNVLNALASICVSFALNIDKESIIKGLESFHGTHRRFELKGVRNDVTVIEDYAHHPTEIKATLSAAKNYPSNRILCVFQPHTYTRTYSLFEDFTESFYNTDTLILADIYPAREKDTGIVSSDMLGNKLRKKNINCINLHSFEDISDYLKKETKPGDLVLIMGAGDIYKAGDLFLK</sequence>
<gene>
    <name evidence="1" type="primary">murC</name>
    <name type="ordered locus">CTC_00185</name>
</gene>
<keyword id="KW-0067">ATP-binding</keyword>
<keyword id="KW-0131">Cell cycle</keyword>
<keyword id="KW-0132">Cell division</keyword>
<keyword id="KW-0133">Cell shape</keyword>
<keyword id="KW-0961">Cell wall biogenesis/degradation</keyword>
<keyword id="KW-0963">Cytoplasm</keyword>
<keyword id="KW-0436">Ligase</keyword>
<keyword id="KW-0547">Nucleotide-binding</keyword>
<keyword id="KW-0573">Peptidoglycan synthesis</keyword>
<keyword id="KW-1185">Reference proteome</keyword>
<evidence type="ECO:0000255" key="1">
    <source>
        <dbReference type="HAMAP-Rule" id="MF_00046"/>
    </source>
</evidence>